<evidence type="ECO:0000255" key="1">
    <source>
        <dbReference type="HAMAP-Rule" id="MF_01371"/>
    </source>
</evidence>
<evidence type="ECO:0000305" key="2"/>
<protein>
    <recommendedName>
        <fullName evidence="1">Large ribosomal subunit protein uL30</fullName>
    </recommendedName>
    <alternativeName>
        <fullName evidence="2">50S ribosomal protein L30</fullName>
    </alternativeName>
</protein>
<organism>
    <name type="scientific">Burkholderia mallei (strain NCTC 10247)</name>
    <dbReference type="NCBI Taxonomy" id="320389"/>
    <lineage>
        <taxon>Bacteria</taxon>
        <taxon>Pseudomonadati</taxon>
        <taxon>Pseudomonadota</taxon>
        <taxon>Betaproteobacteria</taxon>
        <taxon>Burkholderiales</taxon>
        <taxon>Burkholderiaceae</taxon>
        <taxon>Burkholderia</taxon>
        <taxon>pseudomallei group</taxon>
    </lineage>
</organism>
<reference key="1">
    <citation type="journal article" date="2010" name="Genome Biol. Evol.">
        <title>Continuing evolution of Burkholderia mallei through genome reduction and large-scale rearrangements.</title>
        <authorList>
            <person name="Losada L."/>
            <person name="Ronning C.M."/>
            <person name="DeShazer D."/>
            <person name="Woods D."/>
            <person name="Fedorova N."/>
            <person name="Kim H.S."/>
            <person name="Shabalina S.A."/>
            <person name="Pearson T.R."/>
            <person name="Brinkac L."/>
            <person name="Tan P."/>
            <person name="Nandi T."/>
            <person name="Crabtree J."/>
            <person name="Badger J."/>
            <person name="Beckstrom-Sternberg S."/>
            <person name="Saqib M."/>
            <person name="Schutzer S.E."/>
            <person name="Keim P."/>
            <person name="Nierman W.C."/>
        </authorList>
    </citation>
    <scope>NUCLEOTIDE SEQUENCE [LARGE SCALE GENOMIC DNA]</scope>
    <source>
        <strain>NCTC 10247</strain>
    </source>
</reference>
<comment type="subunit">
    <text evidence="1">Part of the 50S ribosomal subunit.</text>
</comment>
<comment type="similarity">
    <text evidence="1">Belongs to the universal ribosomal protein uL30 family.</text>
</comment>
<dbReference type="EMBL" id="CP000548">
    <property type="protein sequence ID" value="ABO06209.1"/>
    <property type="molecule type" value="Genomic_DNA"/>
</dbReference>
<dbReference type="RefSeq" id="WP_004202755.1">
    <property type="nucleotide sequence ID" value="NZ_CP007802.1"/>
</dbReference>
<dbReference type="SMR" id="A3MRX2"/>
<dbReference type="GeneID" id="93061814"/>
<dbReference type="KEGG" id="bmaz:BM44_3023"/>
<dbReference type="KEGG" id="bmn:BMA10247_3496"/>
<dbReference type="PATRIC" id="fig|320389.8.peg.3395"/>
<dbReference type="GO" id="GO:0022625">
    <property type="term" value="C:cytosolic large ribosomal subunit"/>
    <property type="evidence" value="ECO:0007669"/>
    <property type="project" value="TreeGrafter"/>
</dbReference>
<dbReference type="GO" id="GO:0003735">
    <property type="term" value="F:structural constituent of ribosome"/>
    <property type="evidence" value="ECO:0007669"/>
    <property type="project" value="InterPro"/>
</dbReference>
<dbReference type="GO" id="GO:0006412">
    <property type="term" value="P:translation"/>
    <property type="evidence" value="ECO:0007669"/>
    <property type="project" value="UniProtKB-UniRule"/>
</dbReference>
<dbReference type="CDD" id="cd01658">
    <property type="entry name" value="Ribosomal_L30"/>
    <property type="match status" value="1"/>
</dbReference>
<dbReference type="FunFam" id="3.30.1390.20:FF:000001">
    <property type="entry name" value="50S ribosomal protein L30"/>
    <property type="match status" value="1"/>
</dbReference>
<dbReference type="Gene3D" id="3.30.1390.20">
    <property type="entry name" value="Ribosomal protein L30, ferredoxin-like fold domain"/>
    <property type="match status" value="1"/>
</dbReference>
<dbReference type="HAMAP" id="MF_01371_B">
    <property type="entry name" value="Ribosomal_uL30_B"/>
    <property type="match status" value="1"/>
</dbReference>
<dbReference type="InterPro" id="IPR036919">
    <property type="entry name" value="Ribo_uL30_ferredoxin-like_sf"/>
</dbReference>
<dbReference type="InterPro" id="IPR005996">
    <property type="entry name" value="Ribosomal_uL30_bac-type"/>
</dbReference>
<dbReference type="InterPro" id="IPR016082">
    <property type="entry name" value="Ribosomal_uL30_ferredoxin-like"/>
</dbReference>
<dbReference type="NCBIfam" id="TIGR01308">
    <property type="entry name" value="rpmD_bact"/>
    <property type="match status" value="1"/>
</dbReference>
<dbReference type="PANTHER" id="PTHR15892:SF2">
    <property type="entry name" value="LARGE RIBOSOMAL SUBUNIT PROTEIN UL30M"/>
    <property type="match status" value="1"/>
</dbReference>
<dbReference type="PANTHER" id="PTHR15892">
    <property type="entry name" value="MITOCHONDRIAL RIBOSOMAL PROTEIN L30"/>
    <property type="match status" value="1"/>
</dbReference>
<dbReference type="Pfam" id="PF00327">
    <property type="entry name" value="Ribosomal_L30"/>
    <property type="match status" value="1"/>
</dbReference>
<dbReference type="PIRSF" id="PIRSF002211">
    <property type="entry name" value="Ribosomal_L30_bac-type"/>
    <property type="match status" value="1"/>
</dbReference>
<dbReference type="SUPFAM" id="SSF55129">
    <property type="entry name" value="Ribosomal protein L30p/L7e"/>
    <property type="match status" value="1"/>
</dbReference>
<accession>A3MRX2</accession>
<sequence>MSEKTVKVQLVKSLIGTRESHRATVRGLGLRRLNSVSELQDTPAVRGMINKVSYLVKVIG</sequence>
<name>RL30_BURM7</name>
<feature type="chain" id="PRO_1000056018" description="Large ribosomal subunit protein uL30">
    <location>
        <begin position="1"/>
        <end position="60"/>
    </location>
</feature>
<proteinExistence type="inferred from homology"/>
<keyword id="KW-0687">Ribonucleoprotein</keyword>
<keyword id="KW-0689">Ribosomal protein</keyword>
<gene>
    <name evidence="1" type="primary">rpmD</name>
    <name type="ordered locus">BMA10247_3496</name>
</gene>